<name>RS7_SHIB3</name>
<gene>
    <name evidence="1" type="primary">rpsG</name>
    <name type="ordered locus">SbBS512_E3715</name>
</gene>
<keyword id="KW-1185">Reference proteome</keyword>
<keyword id="KW-0687">Ribonucleoprotein</keyword>
<keyword id="KW-0689">Ribosomal protein</keyword>
<keyword id="KW-0694">RNA-binding</keyword>
<keyword id="KW-0699">rRNA-binding</keyword>
<keyword id="KW-0820">tRNA-binding</keyword>
<evidence type="ECO:0000255" key="1">
    <source>
        <dbReference type="HAMAP-Rule" id="MF_00480"/>
    </source>
</evidence>
<evidence type="ECO:0000305" key="2"/>
<accession>B2U2U8</accession>
<proteinExistence type="inferred from homology"/>
<sequence>MPRRRVIGQRKILPDPKFGSELLAKFVNILMVDGKKSTAESIVYSALETLAQRSGKSELEAFEVALENVRPTVEVKSRRVGGSTYQVPVEVRPVRRNALAMRWIVEAARKRGDKSMALRLANELSDAAENKGTAVKKREDVHRMAEANKAFAHYRW</sequence>
<comment type="function">
    <text evidence="1">One of the primary rRNA binding proteins, it binds directly to 16S rRNA where it nucleates assembly of the head domain of the 30S subunit. Is located at the subunit interface close to the decoding center, probably blocks exit of the E-site tRNA.</text>
</comment>
<comment type="subunit">
    <text evidence="1">Part of the 30S ribosomal subunit. Contacts proteins S9 and S11.</text>
</comment>
<comment type="similarity">
    <text evidence="1">Belongs to the universal ribosomal protein uS7 family.</text>
</comment>
<reference key="1">
    <citation type="submission" date="2008-05" db="EMBL/GenBank/DDBJ databases">
        <title>Complete sequence of Shigella boydii serotype 18 strain BS512.</title>
        <authorList>
            <person name="Rasko D.A."/>
            <person name="Rosovitz M."/>
            <person name="Maurelli A.T."/>
            <person name="Myers G."/>
            <person name="Seshadri R."/>
            <person name="Cer R."/>
            <person name="Jiang L."/>
            <person name="Ravel J."/>
            <person name="Sebastian Y."/>
        </authorList>
    </citation>
    <scope>NUCLEOTIDE SEQUENCE [LARGE SCALE GENOMIC DNA]</scope>
    <source>
        <strain>CDC 3083-94 / BS512</strain>
    </source>
</reference>
<protein>
    <recommendedName>
        <fullName evidence="1">Small ribosomal subunit protein uS7</fullName>
    </recommendedName>
    <alternativeName>
        <fullName evidence="2">30S ribosomal protein S7</fullName>
    </alternativeName>
</protein>
<dbReference type="EMBL" id="CP001063">
    <property type="protein sequence ID" value="ACD07786.1"/>
    <property type="molecule type" value="Genomic_DNA"/>
</dbReference>
<dbReference type="RefSeq" id="WP_001138043.1">
    <property type="nucleotide sequence ID" value="NC_010658.1"/>
</dbReference>
<dbReference type="SMR" id="B2U2U8"/>
<dbReference type="STRING" id="344609.SbBS512_E3715"/>
<dbReference type="GeneID" id="93778657"/>
<dbReference type="KEGG" id="sbc:SbBS512_E3715"/>
<dbReference type="HOGENOM" id="CLU_072226_1_1_6"/>
<dbReference type="Proteomes" id="UP000001030">
    <property type="component" value="Chromosome"/>
</dbReference>
<dbReference type="GO" id="GO:0015935">
    <property type="term" value="C:small ribosomal subunit"/>
    <property type="evidence" value="ECO:0007669"/>
    <property type="project" value="InterPro"/>
</dbReference>
<dbReference type="GO" id="GO:0019843">
    <property type="term" value="F:rRNA binding"/>
    <property type="evidence" value="ECO:0007669"/>
    <property type="project" value="UniProtKB-UniRule"/>
</dbReference>
<dbReference type="GO" id="GO:0003735">
    <property type="term" value="F:structural constituent of ribosome"/>
    <property type="evidence" value="ECO:0007669"/>
    <property type="project" value="InterPro"/>
</dbReference>
<dbReference type="GO" id="GO:0000049">
    <property type="term" value="F:tRNA binding"/>
    <property type="evidence" value="ECO:0007669"/>
    <property type="project" value="UniProtKB-UniRule"/>
</dbReference>
<dbReference type="GO" id="GO:0006412">
    <property type="term" value="P:translation"/>
    <property type="evidence" value="ECO:0007669"/>
    <property type="project" value="UniProtKB-UniRule"/>
</dbReference>
<dbReference type="CDD" id="cd14869">
    <property type="entry name" value="uS7_Bacteria"/>
    <property type="match status" value="1"/>
</dbReference>
<dbReference type="FunFam" id="1.10.455.10:FF:000001">
    <property type="entry name" value="30S ribosomal protein S7"/>
    <property type="match status" value="1"/>
</dbReference>
<dbReference type="Gene3D" id="1.10.455.10">
    <property type="entry name" value="Ribosomal protein S7 domain"/>
    <property type="match status" value="1"/>
</dbReference>
<dbReference type="HAMAP" id="MF_00480_B">
    <property type="entry name" value="Ribosomal_uS7_B"/>
    <property type="match status" value="1"/>
</dbReference>
<dbReference type="InterPro" id="IPR000235">
    <property type="entry name" value="Ribosomal_uS7"/>
</dbReference>
<dbReference type="InterPro" id="IPR005717">
    <property type="entry name" value="Ribosomal_uS7_bac/org-type"/>
</dbReference>
<dbReference type="InterPro" id="IPR020606">
    <property type="entry name" value="Ribosomal_uS7_CS"/>
</dbReference>
<dbReference type="InterPro" id="IPR023798">
    <property type="entry name" value="Ribosomal_uS7_dom"/>
</dbReference>
<dbReference type="InterPro" id="IPR036823">
    <property type="entry name" value="Ribosomal_uS7_dom_sf"/>
</dbReference>
<dbReference type="NCBIfam" id="TIGR01029">
    <property type="entry name" value="rpsG_bact"/>
    <property type="match status" value="1"/>
</dbReference>
<dbReference type="PANTHER" id="PTHR11205">
    <property type="entry name" value="RIBOSOMAL PROTEIN S7"/>
    <property type="match status" value="1"/>
</dbReference>
<dbReference type="Pfam" id="PF00177">
    <property type="entry name" value="Ribosomal_S7"/>
    <property type="match status" value="1"/>
</dbReference>
<dbReference type="PIRSF" id="PIRSF002122">
    <property type="entry name" value="RPS7p_RPS7a_RPS5e_RPS7o"/>
    <property type="match status" value="1"/>
</dbReference>
<dbReference type="SUPFAM" id="SSF47973">
    <property type="entry name" value="Ribosomal protein S7"/>
    <property type="match status" value="1"/>
</dbReference>
<dbReference type="PROSITE" id="PS00052">
    <property type="entry name" value="RIBOSOMAL_S7"/>
    <property type="match status" value="1"/>
</dbReference>
<organism>
    <name type="scientific">Shigella boydii serotype 18 (strain CDC 3083-94 / BS512)</name>
    <dbReference type="NCBI Taxonomy" id="344609"/>
    <lineage>
        <taxon>Bacteria</taxon>
        <taxon>Pseudomonadati</taxon>
        <taxon>Pseudomonadota</taxon>
        <taxon>Gammaproteobacteria</taxon>
        <taxon>Enterobacterales</taxon>
        <taxon>Enterobacteriaceae</taxon>
        <taxon>Shigella</taxon>
    </lineage>
</organism>
<feature type="chain" id="PRO_1000126003" description="Small ribosomal subunit protein uS7">
    <location>
        <begin position="1"/>
        <end position="156"/>
    </location>
</feature>